<evidence type="ECO:0000255" key="1"/>
<evidence type="ECO:0000269" key="2">
    <source>
    </source>
</evidence>
<evidence type="ECO:0000305" key="3"/>
<evidence type="ECO:0000312" key="4">
    <source>
        <dbReference type="EMBL" id="BAG12559.1"/>
    </source>
</evidence>
<evidence type="ECO:0000312" key="5">
    <source>
        <dbReference type="MGI" id="MGI:3774845"/>
    </source>
</evidence>
<evidence type="ECO:0000312" key="6">
    <source>
        <dbReference type="Proteomes" id="UP000000589"/>
    </source>
</evidence>
<proteinExistence type="evidence at transcript level"/>
<gene>
    <name evidence="5" type="primary">H60c</name>
</gene>
<reference evidence="4" key="1">
    <citation type="journal article" date="2008" name="J. Immunol.">
        <title>Two novel NKG2D ligands of the mouse H60 family with differential expression patterns and binding affinities to NKG2D.</title>
        <authorList>
            <person name="Takada A."/>
            <person name="Yoshida S."/>
            <person name="Kajikawa M."/>
            <person name="Miyatake Y."/>
            <person name="Tomaru U."/>
            <person name="Sakai M."/>
            <person name="Chiba H."/>
            <person name="Maenaka K."/>
            <person name="Kohda D."/>
            <person name="Fugo K."/>
            <person name="Kasahara M."/>
        </authorList>
    </citation>
    <scope>NUCLEOTIDE SEQUENCE [MRNA]</scope>
    <scope>FUNCTION</scope>
    <scope>SUBCELLULAR LOCATION</scope>
    <scope>TISSUE SPECIFICITY</scope>
    <source>
        <strain evidence="4">C57BL/6J</strain>
    </source>
</reference>
<reference evidence="6" key="2">
    <citation type="journal article" date="2009" name="PLoS Biol.">
        <title>Lineage-specific biology revealed by a finished genome assembly of the mouse.</title>
        <authorList>
            <person name="Church D.M."/>
            <person name="Goodstadt L."/>
            <person name="Hillier L.W."/>
            <person name="Zody M.C."/>
            <person name="Goldstein S."/>
            <person name="She X."/>
            <person name="Bult C.J."/>
            <person name="Agarwala R."/>
            <person name="Cherry J.L."/>
            <person name="DiCuccio M."/>
            <person name="Hlavina W."/>
            <person name="Kapustin Y."/>
            <person name="Meric P."/>
            <person name="Maglott D."/>
            <person name="Birtle Z."/>
            <person name="Marques A.C."/>
            <person name="Graves T."/>
            <person name="Zhou S."/>
            <person name="Teague B."/>
            <person name="Potamousis K."/>
            <person name="Churas C."/>
            <person name="Place M."/>
            <person name="Herschleb J."/>
            <person name="Runnheim R."/>
            <person name="Forrest D."/>
            <person name="Amos-Landgraf J."/>
            <person name="Schwartz D.C."/>
            <person name="Cheng Z."/>
            <person name="Lindblad-Toh K."/>
            <person name="Eichler E.E."/>
            <person name="Ponting C.P."/>
        </authorList>
    </citation>
    <scope>NUCLEOTIDE SEQUENCE [LARGE SCALE GENOMIC DNA]</scope>
    <source>
        <strain evidence="6">C57BL/6J</strain>
    </source>
</reference>
<protein>
    <recommendedName>
        <fullName evidence="3">Histocompatibility antigen 60c</fullName>
    </recommendedName>
</protein>
<keyword id="KW-1003">Cell membrane</keyword>
<keyword id="KW-0325">Glycoprotein</keyword>
<keyword id="KW-0336">GPI-anchor</keyword>
<keyword id="KW-0391">Immunity</keyword>
<keyword id="KW-0449">Lipoprotein</keyword>
<keyword id="KW-0472">Membrane</keyword>
<keyword id="KW-1185">Reference proteome</keyword>
<keyword id="KW-0732">Signal</keyword>
<dbReference type="EMBL" id="AB284506">
    <property type="protein sequence ID" value="BAG12559.1"/>
    <property type="molecule type" value="mRNA"/>
</dbReference>
<dbReference type="EMBL" id="AC157021">
    <property type="status" value="NOT_ANNOTATED_CDS"/>
    <property type="molecule type" value="Genomic_DNA"/>
</dbReference>
<dbReference type="CCDS" id="CCDS56668.1"/>
<dbReference type="RefSeq" id="NP_001191845.1">
    <property type="nucleotide sequence ID" value="NM_001204916.2"/>
</dbReference>
<dbReference type="SMR" id="B1B213"/>
<dbReference type="FunCoup" id="B1B213">
    <property type="interactions" value="1"/>
</dbReference>
<dbReference type="STRING" id="10090.ENSMUSP00000126536"/>
<dbReference type="GlyCosmos" id="B1B213">
    <property type="glycosylation" value="3 sites, No reported glycans"/>
</dbReference>
<dbReference type="GlyGen" id="B1B213">
    <property type="glycosylation" value="3 sites"/>
</dbReference>
<dbReference type="PaxDb" id="10090-ENSMUSP00000126536"/>
<dbReference type="ProteomicsDB" id="269761"/>
<dbReference type="Ensembl" id="ENSMUST00000170893.3">
    <property type="protein sequence ID" value="ENSMUSP00000126536.3"/>
    <property type="gene ID" value="ENSMUSG00000091618.4"/>
</dbReference>
<dbReference type="GeneID" id="670558"/>
<dbReference type="KEGG" id="mmu:670558"/>
<dbReference type="UCSC" id="uc011wzv.1">
    <property type="organism name" value="mouse"/>
</dbReference>
<dbReference type="AGR" id="MGI:3774845"/>
<dbReference type="CTD" id="670558"/>
<dbReference type="MGI" id="MGI:3774845">
    <property type="gene designation" value="H60c"/>
</dbReference>
<dbReference type="VEuPathDB" id="HostDB:ENSMUSG00000091618"/>
<dbReference type="GeneTree" id="ENSGT00940000169591"/>
<dbReference type="HOGENOM" id="CLU_096840_0_0_1"/>
<dbReference type="InParanoid" id="B1B213"/>
<dbReference type="PhylomeDB" id="B1B213"/>
<dbReference type="TreeFam" id="TF339658"/>
<dbReference type="BioGRID-ORCS" id="670558">
    <property type="hits" value="1 hit in 77 CRISPR screens"/>
</dbReference>
<dbReference type="PRO" id="PR:B1B213"/>
<dbReference type="Proteomes" id="UP000000589">
    <property type="component" value="Chromosome 10"/>
</dbReference>
<dbReference type="RNAct" id="B1B213">
    <property type="molecule type" value="protein"/>
</dbReference>
<dbReference type="Bgee" id="ENSMUSG00000091618">
    <property type="expression patterns" value="Expressed in tail skin and 44 other cell types or tissues"/>
</dbReference>
<dbReference type="ExpressionAtlas" id="B1B213">
    <property type="expression patterns" value="baseline and differential"/>
</dbReference>
<dbReference type="GO" id="GO:0005886">
    <property type="term" value="C:plasma membrane"/>
    <property type="evidence" value="ECO:0000314"/>
    <property type="project" value="MGI"/>
</dbReference>
<dbReference type="GO" id="GO:0098552">
    <property type="term" value="C:side of membrane"/>
    <property type="evidence" value="ECO:0007669"/>
    <property type="project" value="UniProtKB-KW"/>
</dbReference>
<dbReference type="GO" id="GO:0046703">
    <property type="term" value="F:natural killer cell lectin-like receptor binding"/>
    <property type="evidence" value="ECO:0000353"/>
    <property type="project" value="MGI"/>
</dbReference>
<dbReference type="GO" id="GO:0042267">
    <property type="term" value="P:natural killer cell mediated cytotoxicity"/>
    <property type="evidence" value="ECO:0000353"/>
    <property type="project" value="MGI"/>
</dbReference>
<dbReference type="FunFam" id="3.30.500.10:FF:000011">
    <property type="entry name" value="Histocompatibility antigen 60b"/>
    <property type="match status" value="1"/>
</dbReference>
<dbReference type="Gene3D" id="3.30.500.10">
    <property type="entry name" value="MHC class I-like antigen recognition-like"/>
    <property type="match status" value="1"/>
</dbReference>
<dbReference type="InterPro" id="IPR037055">
    <property type="entry name" value="MHC_I-like_Ag-recog_sf"/>
</dbReference>
<dbReference type="InterPro" id="IPR011162">
    <property type="entry name" value="MHC_I/II-like_Ag-recog"/>
</dbReference>
<dbReference type="SUPFAM" id="SSF54452">
    <property type="entry name" value="MHC antigen-recognition domain"/>
    <property type="match status" value="1"/>
</dbReference>
<accession>B1B213</accession>
<comment type="function">
    <text evidence="2">Ligand for the KLRK1 immunosurveillance receptor. Binding to KLRK1 stimulates cell lysis in vitro.</text>
</comment>
<comment type="subcellular location">
    <subcellularLocation>
        <location evidence="2">Cell membrane</location>
        <topology evidence="2">Lipid-anchor</topology>
        <topology evidence="2">GPI-anchor</topology>
    </subcellularLocation>
</comment>
<comment type="tissue specificity">
    <text evidence="2">Expressed in skin, and weakly in large intestine.</text>
</comment>
<comment type="similarity">
    <text evidence="3">Belongs to the NKG2D ligand family.</text>
</comment>
<name>H60C_MOUSE</name>
<feature type="signal peptide" evidence="1">
    <location>
        <begin position="1"/>
        <end position="17"/>
    </location>
</feature>
<feature type="chain" id="PRO_5006716406" description="Histocompatibility antigen 60c">
    <location>
        <begin position="18"/>
        <end position="177"/>
    </location>
</feature>
<feature type="propeptide" id="PRO_0000436149" description="Removed in mature form" evidence="1">
    <location>
        <begin position="178"/>
        <end position="197"/>
    </location>
</feature>
<feature type="lipid moiety-binding region" description="GPI-anchor amidated serine" evidence="1">
    <location>
        <position position="177"/>
    </location>
</feature>
<feature type="glycosylation site" description="N-linked (GlcNAc...) asparagine" evidence="1">
    <location>
        <position position="51"/>
    </location>
</feature>
<feature type="glycosylation site" description="N-linked (GlcNAc...) asparagine" evidence="1">
    <location>
        <position position="81"/>
    </location>
</feature>
<feature type="glycosylation site" description="N-linked (GlcNAc...) asparagine" evidence="1">
    <location>
        <position position="114"/>
    </location>
</feature>
<sequence length="197" mass="22340">MALLLLILESCSAGTYALNCKLTVKYRTLQGLCSVNGKTFLDFGDENHEGNATMLCPALYQSLTDISEVMWSLQSGNDALNVTTRSQYYQGEFIDGFWDINTDEQHSIYVYPLNKTWRESHSDNSSAMEQWKNKNLEKDIRNVLMVDFSCCLNKSSPHFREMPTLPTTAAHVDQPRSMACKSSPFDGLIMILLIYIL</sequence>
<organism>
    <name type="scientific">Mus musculus</name>
    <name type="common">Mouse</name>
    <dbReference type="NCBI Taxonomy" id="10090"/>
    <lineage>
        <taxon>Eukaryota</taxon>
        <taxon>Metazoa</taxon>
        <taxon>Chordata</taxon>
        <taxon>Craniata</taxon>
        <taxon>Vertebrata</taxon>
        <taxon>Euteleostomi</taxon>
        <taxon>Mammalia</taxon>
        <taxon>Eutheria</taxon>
        <taxon>Euarchontoglires</taxon>
        <taxon>Glires</taxon>
        <taxon>Rodentia</taxon>
        <taxon>Myomorpha</taxon>
        <taxon>Muroidea</taxon>
        <taxon>Muridae</taxon>
        <taxon>Murinae</taxon>
        <taxon>Mus</taxon>
        <taxon>Mus</taxon>
    </lineage>
</organism>